<sequence length="183" mass="21392">MTKQPEDWLDDVPGDDIEDEDDEIIWVSKSEIKRDAEELKRLGAELVDLGKNALDKIPLDADLRDAIELAQRIKMEGRRRQLQLIGKMLRQRDVEPIRQALDKLKNRHNQQVVLFHKLEHLRDRLIVEGDDAVAEVLTLWPHADRQQLRSLIRNAKKEKEGNKPPKSARQIFQYLRELAENEG</sequence>
<proteinExistence type="inferred from homology"/>
<keyword id="KW-0963">Cytoplasm</keyword>
<keyword id="KW-0690">Ribosome biogenesis</keyword>
<keyword id="KW-0694">RNA-binding</keyword>
<keyword id="KW-0699">rRNA-binding</keyword>
<accession>B5FSC9</accession>
<gene>
    <name evidence="1" type="primary">darP</name>
    <name type="ordered locus">SeD_A4817</name>
</gene>
<comment type="function">
    <text evidence="1">Member of a network of 50S ribosomal subunit biogenesis factors which assembles along the 30S-50S interface, preventing incorrect 23S rRNA structures from forming. Promotes peptidyl transferase center (PTC) maturation.</text>
</comment>
<comment type="subcellular location">
    <subcellularLocation>
        <location evidence="1">Cytoplasm</location>
    </subcellularLocation>
    <text evidence="1">Associates with late stage pre-50S ribosomal subunits.</text>
</comment>
<comment type="similarity">
    <text evidence="1">Belongs to the DarP family.</text>
</comment>
<protein>
    <recommendedName>
        <fullName evidence="1">Dual-action ribosomal maturation protein DarP</fullName>
    </recommendedName>
    <alternativeName>
        <fullName evidence="1">Large ribosomal subunit assembly factor DarP</fullName>
    </alternativeName>
</protein>
<reference key="1">
    <citation type="journal article" date="2011" name="J. Bacteriol.">
        <title>Comparative genomics of 28 Salmonella enterica isolates: evidence for CRISPR-mediated adaptive sublineage evolution.</title>
        <authorList>
            <person name="Fricke W.F."/>
            <person name="Mammel M.K."/>
            <person name="McDermott P.F."/>
            <person name="Tartera C."/>
            <person name="White D.G."/>
            <person name="Leclerc J.E."/>
            <person name="Ravel J."/>
            <person name="Cebula T.A."/>
        </authorList>
    </citation>
    <scope>NUCLEOTIDE SEQUENCE [LARGE SCALE GENOMIC DNA]</scope>
    <source>
        <strain>CT_02021853</strain>
    </source>
</reference>
<name>DARP_SALDC</name>
<dbReference type="EMBL" id="CP001144">
    <property type="protein sequence ID" value="ACH77084.1"/>
    <property type="molecule type" value="Genomic_DNA"/>
</dbReference>
<dbReference type="SMR" id="B5FSC9"/>
<dbReference type="KEGG" id="sed:SeD_A4817"/>
<dbReference type="HOGENOM" id="CLU_106757_2_0_6"/>
<dbReference type="Proteomes" id="UP000008322">
    <property type="component" value="Chromosome"/>
</dbReference>
<dbReference type="GO" id="GO:0005829">
    <property type="term" value="C:cytosol"/>
    <property type="evidence" value="ECO:0007669"/>
    <property type="project" value="TreeGrafter"/>
</dbReference>
<dbReference type="GO" id="GO:0043022">
    <property type="term" value="F:ribosome binding"/>
    <property type="evidence" value="ECO:0007669"/>
    <property type="project" value="UniProtKB-UniRule"/>
</dbReference>
<dbReference type="GO" id="GO:0019843">
    <property type="term" value="F:rRNA binding"/>
    <property type="evidence" value="ECO:0007669"/>
    <property type="project" value="UniProtKB-UniRule"/>
</dbReference>
<dbReference type="GO" id="GO:1902626">
    <property type="term" value="P:assembly of large subunit precursor of preribosome"/>
    <property type="evidence" value="ECO:0007669"/>
    <property type="project" value="UniProtKB-UniRule"/>
</dbReference>
<dbReference type="CDD" id="cd16331">
    <property type="entry name" value="YjgA-like"/>
    <property type="match status" value="1"/>
</dbReference>
<dbReference type="FunFam" id="1.10.60.30:FF:000001">
    <property type="entry name" value="UPF0307 protein YjgA"/>
    <property type="match status" value="1"/>
</dbReference>
<dbReference type="FunFam" id="1.10.60.30:FF:000002">
    <property type="entry name" value="UPF0307 protein YjgA"/>
    <property type="match status" value="1"/>
</dbReference>
<dbReference type="Gene3D" id="1.10.60.30">
    <property type="entry name" value="PSPTO4464-like domains"/>
    <property type="match status" value="2"/>
</dbReference>
<dbReference type="HAMAP" id="MF_00765">
    <property type="entry name" value="DarP"/>
    <property type="match status" value="1"/>
</dbReference>
<dbReference type="InterPro" id="IPR006839">
    <property type="entry name" value="DarP"/>
</dbReference>
<dbReference type="InterPro" id="IPR023153">
    <property type="entry name" value="DarP_sf"/>
</dbReference>
<dbReference type="NCBIfam" id="NF003593">
    <property type="entry name" value="PRK05255.1-1"/>
    <property type="match status" value="1"/>
</dbReference>
<dbReference type="PANTHER" id="PTHR38101">
    <property type="entry name" value="UPF0307 PROTEIN YJGA"/>
    <property type="match status" value="1"/>
</dbReference>
<dbReference type="PANTHER" id="PTHR38101:SF1">
    <property type="entry name" value="UPF0307 PROTEIN YJGA"/>
    <property type="match status" value="1"/>
</dbReference>
<dbReference type="Pfam" id="PF04751">
    <property type="entry name" value="DarP"/>
    <property type="match status" value="1"/>
</dbReference>
<dbReference type="PIRSF" id="PIRSF016183">
    <property type="entry name" value="UCP016183"/>
    <property type="match status" value="1"/>
</dbReference>
<dbReference type="SUPFAM" id="SSF158710">
    <property type="entry name" value="PSPTO4464-like"/>
    <property type="match status" value="1"/>
</dbReference>
<organism>
    <name type="scientific">Salmonella dublin (strain CT_02021853)</name>
    <dbReference type="NCBI Taxonomy" id="439851"/>
    <lineage>
        <taxon>Bacteria</taxon>
        <taxon>Pseudomonadati</taxon>
        <taxon>Pseudomonadota</taxon>
        <taxon>Gammaproteobacteria</taxon>
        <taxon>Enterobacterales</taxon>
        <taxon>Enterobacteriaceae</taxon>
        <taxon>Salmonella</taxon>
    </lineage>
</organism>
<evidence type="ECO:0000255" key="1">
    <source>
        <dbReference type="HAMAP-Rule" id="MF_00765"/>
    </source>
</evidence>
<feature type="chain" id="PRO_1000198393" description="Dual-action ribosomal maturation protein DarP">
    <location>
        <begin position="1"/>
        <end position="183"/>
    </location>
</feature>